<keyword id="KW-0324">Glycolysis</keyword>
<keyword id="KW-0413">Isomerase</keyword>
<keyword id="KW-1185">Reference proteome</keyword>
<reference key="1">
    <citation type="journal article" date="2001" name="Nature">
        <title>Genome sequence of Yersinia pestis, the causative agent of plague.</title>
        <authorList>
            <person name="Parkhill J."/>
            <person name="Wren B.W."/>
            <person name="Thomson N.R."/>
            <person name="Titball R.W."/>
            <person name="Holden M.T.G."/>
            <person name="Prentice M.B."/>
            <person name="Sebaihia M."/>
            <person name="James K.D."/>
            <person name="Churcher C.M."/>
            <person name="Mungall K.L."/>
            <person name="Baker S."/>
            <person name="Basham D."/>
            <person name="Bentley S.D."/>
            <person name="Brooks K."/>
            <person name="Cerdeno-Tarraga A.-M."/>
            <person name="Chillingworth T."/>
            <person name="Cronin A."/>
            <person name="Davies R.M."/>
            <person name="Davis P."/>
            <person name="Dougan G."/>
            <person name="Feltwell T."/>
            <person name="Hamlin N."/>
            <person name="Holroyd S."/>
            <person name="Jagels K."/>
            <person name="Karlyshev A.V."/>
            <person name="Leather S."/>
            <person name="Moule S."/>
            <person name="Oyston P.C.F."/>
            <person name="Quail M.A."/>
            <person name="Rutherford K.M."/>
            <person name="Simmonds M."/>
            <person name="Skelton J."/>
            <person name="Stevens K."/>
            <person name="Whitehead S."/>
            <person name="Barrell B.G."/>
        </authorList>
    </citation>
    <scope>NUCLEOTIDE SEQUENCE [LARGE SCALE GENOMIC DNA]</scope>
    <source>
        <strain>CO-92 / Biovar Orientalis</strain>
    </source>
</reference>
<reference key="2">
    <citation type="journal article" date="2002" name="J. Bacteriol.">
        <title>Genome sequence of Yersinia pestis KIM.</title>
        <authorList>
            <person name="Deng W."/>
            <person name="Burland V."/>
            <person name="Plunkett G. III"/>
            <person name="Boutin A."/>
            <person name="Mayhew G.F."/>
            <person name="Liss P."/>
            <person name="Perna N.T."/>
            <person name="Rose D.J."/>
            <person name="Mau B."/>
            <person name="Zhou S."/>
            <person name="Schwartz D.C."/>
            <person name="Fetherston J.D."/>
            <person name="Lindler L.E."/>
            <person name="Brubaker R.R."/>
            <person name="Plano G.V."/>
            <person name="Straley S.C."/>
            <person name="McDonough K.A."/>
            <person name="Nilles M.L."/>
            <person name="Matson J.S."/>
            <person name="Blattner F.R."/>
            <person name="Perry R.D."/>
        </authorList>
    </citation>
    <scope>NUCLEOTIDE SEQUENCE [LARGE SCALE GENOMIC DNA]</scope>
    <source>
        <strain>KIM10+ / Biovar Mediaevalis</strain>
    </source>
</reference>
<reference key="3">
    <citation type="journal article" date="2004" name="DNA Res.">
        <title>Complete genome sequence of Yersinia pestis strain 91001, an isolate avirulent to humans.</title>
        <authorList>
            <person name="Song Y."/>
            <person name="Tong Z."/>
            <person name="Wang J."/>
            <person name="Wang L."/>
            <person name="Guo Z."/>
            <person name="Han Y."/>
            <person name="Zhang J."/>
            <person name="Pei D."/>
            <person name="Zhou D."/>
            <person name="Qin H."/>
            <person name="Pang X."/>
            <person name="Han Y."/>
            <person name="Zhai J."/>
            <person name="Li M."/>
            <person name="Cui B."/>
            <person name="Qi Z."/>
            <person name="Jin L."/>
            <person name="Dai R."/>
            <person name="Chen F."/>
            <person name="Li S."/>
            <person name="Ye C."/>
            <person name="Du Z."/>
            <person name="Lin W."/>
            <person name="Wang J."/>
            <person name="Yu J."/>
            <person name="Yang H."/>
            <person name="Wang J."/>
            <person name="Huang P."/>
            <person name="Yang R."/>
        </authorList>
    </citation>
    <scope>NUCLEOTIDE SEQUENCE [LARGE SCALE GENOMIC DNA]</scope>
    <source>
        <strain>91001 / Biovar Mediaevalis</strain>
    </source>
</reference>
<sequence>MLQVYLVRHGETLWNAARRIQGQSDSPLTEIGIRQAHLVAQRVRNQGITHIISSDLGRTQQTAKIIADACGLTMVTDPRLRELNMGVLENRPIDSLTPEEEQWRKQMVNGTEGARIPEGESMTELGRRMHAALDSCLELPAGSKPLLVSHGMALGCLLSTLLGLPAHAERRLRLRNCSLSRVDYQESPWLASGWVIESAGDTAHLDMPALDELQR</sequence>
<evidence type="ECO:0000255" key="1">
    <source>
        <dbReference type="HAMAP-Rule" id="MF_01040"/>
    </source>
</evidence>
<organism>
    <name type="scientific">Yersinia pestis</name>
    <dbReference type="NCBI Taxonomy" id="632"/>
    <lineage>
        <taxon>Bacteria</taxon>
        <taxon>Pseudomonadati</taxon>
        <taxon>Pseudomonadota</taxon>
        <taxon>Gammaproteobacteria</taxon>
        <taxon>Enterobacterales</taxon>
        <taxon>Yersiniaceae</taxon>
        <taxon>Yersinia</taxon>
    </lineage>
</organism>
<feature type="chain" id="PRO_0000179953" description="Probable phosphoglycerate mutase GpmB">
    <location>
        <begin position="1"/>
        <end position="215"/>
    </location>
</feature>
<feature type="active site" description="Tele-phosphohistidine intermediate" evidence="1">
    <location>
        <position position="9"/>
    </location>
</feature>
<feature type="active site" description="Proton donor/acceptor" evidence="1">
    <location>
        <position position="82"/>
    </location>
</feature>
<feature type="binding site" evidence="1">
    <location>
        <begin position="8"/>
        <end position="15"/>
    </location>
    <ligand>
        <name>substrate</name>
    </ligand>
</feature>
<feature type="binding site" evidence="1">
    <location>
        <begin position="21"/>
        <end position="22"/>
    </location>
    <ligand>
        <name>substrate</name>
    </ligand>
</feature>
<feature type="binding site" evidence="1">
    <location>
        <position position="58"/>
    </location>
    <ligand>
        <name>substrate</name>
    </ligand>
</feature>
<feature type="binding site" evidence="1">
    <location>
        <begin position="82"/>
        <end position="85"/>
    </location>
    <ligand>
        <name>substrate</name>
    </ligand>
</feature>
<feature type="binding site" evidence="1">
    <location>
        <begin position="151"/>
        <end position="152"/>
    </location>
    <ligand>
        <name>substrate</name>
    </ligand>
</feature>
<feature type="site" description="Transition state stabilizer" evidence="1">
    <location>
        <position position="150"/>
    </location>
</feature>
<dbReference type="EC" id="5.4.2.-" evidence="1"/>
<dbReference type="EMBL" id="AL590842">
    <property type="protein sequence ID" value="CAL19134.1"/>
    <property type="molecule type" value="Genomic_DNA"/>
</dbReference>
<dbReference type="EMBL" id="AE009952">
    <property type="protein sequence ID" value="AAM87272.1"/>
    <property type="molecule type" value="Genomic_DNA"/>
</dbReference>
<dbReference type="EMBL" id="AE017042">
    <property type="protein sequence ID" value="AAS63876.1"/>
    <property type="molecule type" value="Genomic_DNA"/>
</dbReference>
<dbReference type="PIR" id="AD0056">
    <property type="entry name" value="AD0056"/>
</dbReference>
<dbReference type="RefSeq" id="WP_002209230.1">
    <property type="nucleotide sequence ID" value="NZ_WUCM01000002.1"/>
</dbReference>
<dbReference type="RefSeq" id="YP_002345527.1">
    <property type="nucleotide sequence ID" value="NC_003143.1"/>
</dbReference>
<dbReference type="SMR" id="Q8ZIP0"/>
<dbReference type="STRING" id="214092.YPO0455"/>
<dbReference type="PaxDb" id="214092-YPO0455"/>
<dbReference type="DNASU" id="1148671"/>
<dbReference type="EnsemblBacteria" id="AAS63876">
    <property type="protein sequence ID" value="AAS63876"/>
    <property type="gene ID" value="YP_3728"/>
</dbReference>
<dbReference type="GeneID" id="57974154"/>
<dbReference type="KEGG" id="ype:YPO0455"/>
<dbReference type="KEGG" id="ypk:y3724"/>
<dbReference type="KEGG" id="ypm:YP_3728"/>
<dbReference type="PATRIC" id="fig|214092.21.peg.699"/>
<dbReference type="eggNOG" id="COG0406">
    <property type="taxonomic scope" value="Bacteria"/>
</dbReference>
<dbReference type="HOGENOM" id="CLU_033323_9_5_6"/>
<dbReference type="OMA" id="TEWNVAR"/>
<dbReference type="OrthoDB" id="9783269at2"/>
<dbReference type="UniPathway" id="UPA00109">
    <property type="reaction ID" value="UER00186"/>
</dbReference>
<dbReference type="Proteomes" id="UP000000815">
    <property type="component" value="Chromosome"/>
</dbReference>
<dbReference type="Proteomes" id="UP000001019">
    <property type="component" value="Chromosome"/>
</dbReference>
<dbReference type="Proteomes" id="UP000002490">
    <property type="component" value="Chromosome"/>
</dbReference>
<dbReference type="GO" id="GO:0005737">
    <property type="term" value="C:cytoplasm"/>
    <property type="evidence" value="ECO:0000318"/>
    <property type="project" value="GO_Central"/>
</dbReference>
<dbReference type="GO" id="GO:0016791">
    <property type="term" value="F:phosphatase activity"/>
    <property type="evidence" value="ECO:0000318"/>
    <property type="project" value="GO_Central"/>
</dbReference>
<dbReference type="GO" id="GO:0004619">
    <property type="term" value="F:phosphoglycerate mutase activity"/>
    <property type="evidence" value="ECO:0007669"/>
    <property type="project" value="UniProtKB-UniRule"/>
</dbReference>
<dbReference type="GO" id="GO:0006096">
    <property type="term" value="P:glycolytic process"/>
    <property type="evidence" value="ECO:0007669"/>
    <property type="project" value="UniProtKB-UniRule"/>
</dbReference>
<dbReference type="CDD" id="cd07067">
    <property type="entry name" value="HP_PGM_like"/>
    <property type="match status" value="1"/>
</dbReference>
<dbReference type="Gene3D" id="3.40.50.1240">
    <property type="entry name" value="Phosphoglycerate mutase-like"/>
    <property type="match status" value="1"/>
</dbReference>
<dbReference type="HAMAP" id="MF_01040">
    <property type="entry name" value="PGAM_GpmB"/>
    <property type="match status" value="1"/>
</dbReference>
<dbReference type="InterPro" id="IPR013078">
    <property type="entry name" value="His_Pase_superF_clade-1"/>
</dbReference>
<dbReference type="InterPro" id="IPR029033">
    <property type="entry name" value="His_PPase_superfam"/>
</dbReference>
<dbReference type="InterPro" id="IPR001345">
    <property type="entry name" value="PG/BPGM_mutase_AS"/>
</dbReference>
<dbReference type="InterPro" id="IPR050275">
    <property type="entry name" value="PGM_Phosphatase"/>
</dbReference>
<dbReference type="InterPro" id="IPR023086">
    <property type="entry name" value="Phosphoglycerate_mutase_GpmB"/>
</dbReference>
<dbReference type="NCBIfam" id="NF002901">
    <property type="entry name" value="PRK03482.1"/>
    <property type="match status" value="1"/>
</dbReference>
<dbReference type="PANTHER" id="PTHR48100">
    <property type="entry name" value="BROAD-SPECIFICITY PHOSPHATASE YOR283W-RELATED"/>
    <property type="match status" value="1"/>
</dbReference>
<dbReference type="PANTHER" id="PTHR48100:SF1">
    <property type="entry name" value="HISTIDINE PHOSPHATASE FAMILY PROTEIN-RELATED"/>
    <property type="match status" value="1"/>
</dbReference>
<dbReference type="Pfam" id="PF00300">
    <property type="entry name" value="His_Phos_1"/>
    <property type="match status" value="1"/>
</dbReference>
<dbReference type="SMART" id="SM00855">
    <property type="entry name" value="PGAM"/>
    <property type="match status" value="1"/>
</dbReference>
<dbReference type="SUPFAM" id="SSF53254">
    <property type="entry name" value="Phosphoglycerate mutase-like"/>
    <property type="match status" value="1"/>
</dbReference>
<dbReference type="PROSITE" id="PS00175">
    <property type="entry name" value="PG_MUTASE"/>
    <property type="match status" value="1"/>
</dbReference>
<gene>
    <name evidence="1" type="primary">gpmB</name>
    <name type="ordered locus">YPO0455</name>
    <name type="ordered locus">y3724</name>
    <name type="ordered locus">YP_3728</name>
</gene>
<name>GPMB_YERPE</name>
<proteinExistence type="inferred from homology"/>
<protein>
    <recommendedName>
        <fullName evidence="1">Probable phosphoglycerate mutase GpmB</fullName>
        <ecNumber evidence="1">5.4.2.-</ecNumber>
    </recommendedName>
    <alternativeName>
        <fullName evidence="1">PGAM</fullName>
    </alternativeName>
    <alternativeName>
        <fullName evidence="1">Phosphoglyceromutase</fullName>
    </alternativeName>
</protein>
<comment type="catalytic activity">
    <reaction evidence="1">
        <text>(2R)-2-phosphoglycerate = (2R)-3-phosphoglycerate</text>
        <dbReference type="Rhea" id="RHEA:15901"/>
        <dbReference type="ChEBI" id="CHEBI:58272"/>
        <dbReference type="ChEBI" id="CHEBI:58289"/>
    </reaction>
</comment>
<comment type="pathway">
    <text evidence="1">Carbohydrate degradation; glycolysis; pyruvate from D-glyceraldehyde 3-phosphate: step 3/5.</text>
</comment>
<comment type="similarity">
    <text evidence="1">Belongs to the phosphoglycerate mutase family. GpmB subfamily.</text>
</comment>
<accession>Q8ZIP0</accession>
<accession>Q0WJL1</accession>